<sequence length="173" mass="18586">MAIILGIDPGSRITGYGVIQRAGRQQQYLGSGCIRMQGDALAPRLQQIFDGVSQLILQYKPDMFAIEQVFMAKNPDSALKLGQARGAAIVAASNQGLDVAEYSARQIKQSVVGNGNAQKSQVQHMVTFILKLPGTPQADAADALAVALCHSHTNENLIKMSGQVKKTVRGRLR</sequence>
<evidence type="ECO:0000255" key="1">
    <source>
        <dbReference type="HAMAP-Rule" id="MF_00034"/>
    </source>
</evidence>
<protein>
    <recommendedName>
        <fullName evidence="1">Crossover junction endodeoxyribonuclease RuvC</fullName>
        <ecNumber evidence="1">3.1.21.10</ecNumber>
    </recommendedName>
    <alternativeName>
        <fullName evidence="1">Holliday junction nuclease RuvC</fullName>
    </alternativeName>
    <alternativeName>
        <fullName evidence="1">Holliday junction resolvase RuvC</fullName>
    </alternativeName>
</protein>
<accession>Q15RN4</accession>
<gene>
    <name evidence="1" type="primary">ruvC</name>
    <name type="ordered locus">Patl_2946</name>
</gene>
<reference key="1">
    <citation type="submission" date="2006-06" db="EMBL/GenBank/DDBJ databases">
        <title>Complete sequence of Pseudoalteromonas atlantica T6c.</title>
        <authorList>
            <consortium name="US DOE Joint Genome Institute"/>
            <person name="Copeland A."/>
            <person name="Lucas S."/>
            <person name="Lapidus A."/>
            <person name="Barry K."/>
            <person name="Detter J.C."/>
            <person name="Glavina del Rio T."/>
            <person name="Hammon N."/>
            <person name="Israni S."/>
            <person name="Dalin E."/>
            <person name="Tice H."/>
            <person name="Pitluck S."/>
            <person name="Saunders E."/>
            <person name="Brettin T."/>
            <person name="Bruce D."/>
            <person name="Han C."/>
            <person name="Tapia R."/>
            <person name="Gilna P."/>
            <person name="Schmutz J."/>
            <person name="Larimer F."/>
            <person name="Land M."/>
            <person name="Hauser L."/>
            <person name="Kyrpides N."/>
            <person name="Kim E."/>
            <person name="Karls A.C."/>
            <person name="Bartlett D."/>
            <person name="Higgins B.P."/>
            <person name="Richardson P."/>
        </authorList>
    </citation>
    <scope>NUCLEOTIDE SEQUENCE [LARGE SCALE GENOMIC DNA]</scope>
    <source>
        <strain>T6c / ATCC BAA-1087</strain>
    </source>
</reference>
<name>RUVC_PSEA6</name>
<keyword id="KW-0963">Cytoplasm</keyword>
<keyword id="KW-0227">DNA damage</keyword>
<keyword id="KW-0233">DNA recombination</keyword>
<keyword id="KW-0234">DNA repair</keyword>
<keyword id="KW-0238">DNA-binding</keyword>
<keyword id="KW-0255">Endonuclease</keyword>
<keyword id="KW-0378">Hydrolase</keyword>
<keyword id="KW-0460">Magnesium</keyword>
<keyword id="KW-0479">Metal-binding</keyword>
<keyword id="KW-0540">Nuclease</keyword>
<comment type="function">
    <text evidence="1">The RuvA-RuvB-RuvC complex processes Holliday junction (HJ) DNA during genetic recombination and DNA repair. Endonuclease that resolves HJ intermediates. Cleaves cruciform DNA by making single-stranded nicks across the HJ at symmetrical positions within the homologous arms, yielding a 5'-phosphate and a 3'-hydroxyl group; requires a central core of homology in the junction. The consensus cleavage sequence is 5'-(A/T)TT(C/G)-3'. Cleavage occurs on the 3'-side of the TT dinucleotide at the point of strand exchange. HJ branch migration catalyzed by RuvA-RuvB allows RuvC to scan DNA until it finds its consensus sequence, where it cleaves and resolves the cruciform DNA.</text>
</comment>
<comment type="catalytic activity">
    <reaction evidence="1">
        <text>Endonucleolytic cleavage at a junction such as a reciprocal single-stranded crossover between two homologous DNA duplexes (Holliday junction).</text>
        <dbReference type="EC" id="3.1.21.10"/>
    </reaction>
</comment>
<comment type="cofactor">
    <cofactor evidence="1">
        <name>Mg(2+)</name>
        <dbReference type="ChEBI" id="CHEBI:18420"/>
    </cofactor>
    <text evidence="1">Binds 2 Mg(2+) ion per subunit.</text>
</comment>
<comment type="subunit">
    <text evidence="1">Homodimer which binds Holliday junction (HJ) DNA. The HJ becomes 2-fold symmetrical on binding to RuvC with unstacked arms; it has a different conformation from HJ DNA in complex with RuvA. In the full resolvosome a probable DNA-RuvA(4)-RuvB(12)-RuvC(2) complex forms which resolves the HJ.</text>
</comment>
<comment type="subcellular location">
    <subcellularLocation>
        <location evidence="1">Cytoplasm</location>
    </subcellularLocation>
</comment>
<comment type="similarity">
    <text evidence="1">Belongs to the RuvC family.</text>
</comment>
<proteinExistence type="inferred from homology"/>
<feature type="chain" id="PRO_1000002798" description="Crossover junction endodeoxyribonuclease RuvC">
    <location>
        <begin position="1"/>
        <end position="173"/>
    </location>
</feature>
<feature type="active site" evidence="1">
    <location>
        <position position="8"/>
    </location>
</feature>
<feature type="active site" evidence="1">
    <location>
        <position position="67"/>
    </location>
</feature>
<feature type="active site" evidence="1">
    <location>
        <position position="139"/>
    </location>
</feature>
<feature type="binding site" evidence="1">
    <location>
        <position position="8"/>
    </location>
    <ligand>
        <name>Mg(2+)</name>
        <dbReference type="ChEBI" id="CHEBI:18420"/>
        <label>1</label>
    </ligand>
</feature>
<feature type="binding site" evidence="1">
    <location>
        <position position="67"/>
    </location>
    <ligand>
        <name>Mg(2+)</name>
        <dbReference type="ChEBI" id="CHEBI:18420"/>
        <label>2</label>
    </ligand>
</feature>
<feature type="binding site" evidence="1">
    <location>
        <position position="139"/>
    </location>
    <ligand>
        <name>Mg(2+)</name>
        <dbReference type="ChEBI" id="CHEBI:18420"/>
        <label>1</label>
    </ligand>
</feature>
<organism>
    <name type="scientific">Pseudoalteromonas atlantica (strain T6c / ATCC BAA-1087)</name>
    <dbReference type="NCBI Taxonomy" id="3042615"/>
    <lineage>
        <taxon>Bacteria</taxon>
        <taxon>Pseudomonadati</taxon>
        <taxon>Pseudomonadota</taxon>
        <taxon>Gammaproteobacteria</taxon>
        <taxon>Alteromonadales</taxon>
        <taxon>Alteromonadaceae</taxon>
        <taxon>Paraglaciecola</taxon>
    </lineage>
</organism>
<dbReference type="EC" id="3.1.21.10" evidence="1"/>
<dbReference type="EMBL" id="CP000388">
    <property type="protein sequence ID" value="ABG41454.1"/>
    <property type="molecule type" value="Genomic_DNA"/>
</dbReference>
<dbReference type="RefSeq" id="WP_006993621.1">
    <property type="nucleotide sequence ID" value="NC_008228.1"/>
</dbReference>
<dbReference type="SMR" id="Q15RN4"/>
<dbReference type="STRING" id="342610.Patl_2946"/>
<dbReference type="KEGG" id="pat:Patl_2946"/>
<dbReference type="eggNOG" id="COG0817">
    <property type="taxonomic scope" value="Bacteria"/>
</dbReference>
<dbReference type="HOGENOM" id="CLU_091257_2_1_6"/>
<dbReference type="OrthoDB" id="9805499at2"/>
<dbReference type="Proteomes" id="UP000001981">
    <property type="component" value="Chromosome"/>
</dbReference>
<dbReference type="GO" id="GO:0005737">
    <property type="term" value="C:cytoplasm"/>
    <property type="evidence" value="ECO:0007669"/>
    <property type="project" value="UniProtKB-SubCell"/>
</dbReference>
<dbReference type="GO" id="GO:0048476">
    <property type="term" value="C:Holliday junction resolvase complex"/>
    <property type="evidence" value="ECO:0007669"/>
    <property type="project" value="UniProtKB-UniRule"/>
</dbReference>
<dbReference type="GO" id="GO:0008821">
    <property type="term" value="F:crossover junction DNA endonuclease activity"/>
    <property type="evidence" value="ECO:0007669"/>
    <property type="project" value="UniProtKB-UniRule"/>
</dbReference>
<dbReference type="GO" id="GO:0003677">
    <property type="term" value="F:DNA binding"/>
    <property type="evidence" value="ECO:0007669"/>
    <property type="project" value="UniProtKB-KW"/>
</dbReference>
<dbReference type="GO" id="GO:0000287">
    <property type="term" value="F:magnesium ion binding"/>
    <property type="evidence" value="ECO:0007669"/>
    <property type="project" value="UniProtKB-UniRule"/>
</dbReference>
<dbReference type="GO" id="GO:0006310">
    <property type="term" value="P:DNA recombination"/>
    <property type="evidence" value="ECO:0007669"/>
    <property type="project" value="UniProtKB-UniRule"/>
</dbReference>
<dbReference type="GO" id="GO:0006281">
    <property type="term" value="P:DNA repair"/>
    <property type="evidence" value="ECO:0007669"/>
    <property type="project" value="UniProtKB-UniRule"/>
</dbReference>
<dbReference type="CDD" id="cd16962">
    <property type="entry name" value="RuvC"/>
    <property type="match status" value="1"/>
</dbReference>
<dbReference type="FunFam" id="3.30.420.10:FF:000002">
    <property type="entry name" value="Crossover junction endodeoxyribonuclease RuvC"/>
    <property type="match status" value="1"/>
</dbReference>
<dbReference type="Gene3D" id="3.30.420.10">
    <property type="entry name" value="Ribonuclease H-like superfamily/Ribonuclease H"/>
    <property type="match status" value="1"/>
</dbReference>
<dbReference type="HAMAP" id="MF_00034">
    <property type="entry name" value="RuvC"/>
    <property type="match status" value="1"/>
</dbReference>
<dbReference type="InterPro" id="IPR012337">
    <property type="entry name" value="RNaseH-like_sf"/>
</dbReference>
<dbReference type="InterPro" id="IPR036397">
    <property type="entry name" value="RNaseH_sf"/>
</dbReference>
<dbReference type="InterPro" id="IPR020563">
    <property type="entry name" value="X-over_junc_endoDNase_Mg_BS"/>
</dbReference>
<dbReference type="InterPro" id="IPR002176">
    <property type="entry name" value="X-over_junc_endoDNase_RuvC"/>
</dbReference>
<dbReference type="NCBIfam" id="TIGR00228">
    <property type="entry name" value="ruvC"/>
    <property type="match status" value="1"/>
</dbReference>
<dbReference type="PANTHER" id="PTHR30194">
    <property type="entry name" value="CROSSOVER JUNCTION ENDODEOXYRIBONUCLEASE RUVC"/>
    <property type="match status" value="1"/>
</dbReference>
<dbReference type="PANTHER" id="PTHR30194:SF3">
    <property type="entry name" value="CROSSOVER JUNCTION ENDODEOXYRIBONUCLEASE RUVC"/>
    <property type="match status" value="1"/>
</dbReference>
<dbReference type="Pfam" id="PF02075">
    <property type="entry name" value="RuvC"/>
    <property type="match status" value="1"/>
</dbReference>
<dbReference type="PRINTS" id="PR00696">
    <property type="entry name" value="RSOLVASERUVC"/>
</dbReference>
<dbReference type="SUPFAM" id="SSF53098">
    <property type="entry name" value="Ribonuclease H-like"/>
    <property type="match status" value="1"/>
</dbReference>
<dbReference type="PROSITE" id="PS01321">
    <property type="entry name" value="RUVC"/>
    <property type="match status" value="1"/>
</dbReference>